<name>ZMAT3_RAT</name>
<sequence>MILLQQVWLPLPNRPSTSPPMSVAARSTGTLQLPPQKAFGQEASLPLAGEEDLAKRGEPDSALEELCKPLFCKLCNVTLNSAQQAQAHYQGKNHGKKLRNYYAANSCPPPARMSSVAEPVATPLVPVPPQVGSCKPGGRVILATENDYCKLCDASFSSPAVAQAHYQGKNHAKRLRLAEAQSHSFSDSAEAGQRRTRKEGSEFKMVTTRRNMYTVQSNSGPYFNARSRQRIPRDLAMCVTPSGQFYCSMCNVGAGEEVEFRQHLESKQHKSKVSEQRYRSEMENLGYVQ</sequence>
<comment type="function">
    <text evidence="4 5">Acts as a bona fide target gene of p53/TP53. May play a role in the TP53-dependent growth regulatory pathway. May contribute to TP53-mediated apoptosis by regulation of TP53 expression and translocation to the nucleus and nucleolus.</text>
</comment>
<comment type="subunit">
    <text evidence="1">Interacts with dsRNA.</text>
</comment>
<comment type="subcellular location">
    <subcellularLocation>
        <location evidence="4 5">Nucleus</location>
    </subcellularLocation>
    <subcellularLocation>
        <location evidence="4 5">Nucleus</location>
        <location evidence="4 5">Nucleolus</location>
    </subcellularLocation>
</comment>
<comment type="tissue specificity">
    <text evidence="5">Highly expressed in brain, gut, lung, and testis.</text>
</comment>
<comment type="induction">
    <text evidence="4 5">By DNA damage in a p53-dependent manner, and by 6-hydroxydopamine (6-OHDA) in PC12 cells.</text>
</comment>
<evidence type="ECO:0000250" key="1">
    <source>
        <dbReference type="UniProtKB" id="Q9HA38"/>
    </source>
</evidence>
<evidence type="ECO:0000255" key="2"/>
<evidence type="ECO:0000256" key="3">
    <source>
        <dbReference type="SAM" id="MobiDB-lite"/>
    </source>
</evidence>
<evidence type="ECO:0000269" key="4">
    <source>
    </source>
</evidence>
<evidence type="ECO:0000269" key="5">
    <source>
    </source>
</evidence>
<evidence type="ECO:0000305" key="6"/>
<evidence type="ECO:0000312" key="7">
    <source>
        <dbReference type="EMBL" id="CAA73610.1"/>
    </source>
</evidence>
<evidence type="ECO:0000312" key="8">
    <source>
        <dbReference type="RGD" id="620134"/>
    </source>
</evidence>
<feature type="chain" id="PRO_0000310781" description="Zinc finger matrin-type protein 3">
    <location>
        <begin position="1"/>
        <end position="289"/>
    </location>
</feature>
<feature type="zinc finger region" description="Matrin-type 1" evidence="2">
    <location>
        <begin position="70"/>
        <end position="100"/>
    </location>
</feature>
<feature type="zinc finger region" description="Matrin-type 2" evidence="2">
    <location>
        <begin position="147"/>
        <end position="177"/>
    </location>
</feature>
<feature type="zinc finger region" description="Matrin-type 3" evidence="2">
    <location>
        <begin position="245"/>
        <end position="275"/>
    </location>
</feature>
<feature type="region of interest" description="Disordered" evidence="3">
    <location>
        <begin position="180"/>
        <end position="202"/>
    </location>
</feature>
<feature type="region of interest" description="Disordered" evidence="3">
    <location>
        <begin position="265"/>
        <end position="289"/>
    </location>
</feature>
<feature type="compositionally biased region" description="Basic and acidic residues" evidence="3">
    <location>
        <begin position="265"/>
        <end position="282"/>
    </location>
</feature>
<gene>
    <name evidence="1" type="primary">Zmat3</name>
    <name evidence="7" type="synonym">Pag608</name>
    <name evidence="8" type="synonym">Wig1</name>
</gene>
<accession>O08781</accession>
<reference evidence="6 7" key="1">
    <citation type="journal article" date="1997" name="EMBO J.">
        <title>A novel p53-inducible gene, PAG608, encodes a nuclear zinc finger protein whose overexpression promotes apoptosis.</title>
        <authorList>
            <person name="Israeli D."/>
            <person name="Tessler E."/>
            <person name="Haupt Y."/>
            <person name="Elkeles A."/>
            <person name="Wilder S."/>
            <person name="Amson R."/>
            <person name="Telerman A."/>
            <person name="Oren M."/>
        </authorList>
    </citation>
    <scope>NUCLEOTIDE SEQUENCE [MRNA]</scope>
    <scope>FUNCTION</scope>
    <scope>SUBCELLULAR LOCATION</scope>
    <scope>TISSUE SPECIFICITY</scope>
    <scope>INDUCTION</scope>
    <source>
        <strain evidence="7">Fischer</strain>
        <tissue evidence="7">Embryonic fibroblast</tissue>
    </source>
</reference>
<reference evidence="6" key="2">
    <citation type="journal article" date="2002" name="J. Biol. Chem.">
        <title>The p53-activated gene, PAG608, requires a zinc finger domain for nuclear localization and oxidative stress-induced apoptosis.</title>
        <authorList>
            <person name="Higashi Y."/>
            <person name="Asanuma M."/>
            <person name="Miyazaki I."/>
            <person name="Haque M.E."/>
            <person name="Fujita N."/>
            <person name="Tanaka K."/>
            <person name="Ogawa N."/>
        </authorList>
    </citation>
    <scope>FUNCTION</scope>
    <scope>SUBCELLULAR LOCATION</scope>
    <scope>INDUCTION</scope>
</reference>
<protein>
    <recommendedName>
        <fullName>Zinc finger matrin-type protein 3</fullName>
    </recommendedName>
    <alternativeName>
        <fullName>Zinc finger protein WIG-1</fullName>
    </alternativeName>
    <alternativeName>
        <fullName>p53-activated gene 608 protein</fullName>
    </alternativeName>
</protein>
<proteinExistence type="evidence at transcript level"/>
<organism>
    <name type="scientific">Rattus norvegicus</name>
    <name type="common">Rat</name>
    <dbReference type="NCBI Taxonomy" id="10116"/>
    <lineage>
        <taxon>Eukaryota</taxon>
        <taxon>Metazoa</taxon>
        <taxon>Chordata</taxon>
        <taxon>Craniata</taxon>
        <taxon>Vertebrata</taxon>
        <taxon>Euteleostomi</taxon>
        <taxon>Mammalia</taxon>
        <taxon>Eutheria</taxon>
        <taxon>Euarchontoglires</taxon>
        <taxon>Glires</taxon>
        <taxon>Rodentia</taxon>
        <taxon>Myomorpha</taxon>
        <taxon>Muroidea</taxon>
        <taxon>Muridae</taxon>
        <taxon>Murinae</taxon>
        <taxon>Rattus</taxon>
    </lineage>
</organism>
<dbReference type="EMBL" id="Y13148">
    <property type="protein sequence ID" value="CAA73610.1"/>
    <property type="molecule type" value="mRNA"/>
</dbReference>
<dbReference type="RefSeq" id="NP_071993.1">
    <property type="nucleotide sequence ID" value="NM_022548.3"/>
</dbReference>
<dbReference type="RefSeq" id="XP_063138555.1">
    <property type="nucleotide sequence ID" value="XM_063282485.1"/>
</dbReference>
<dbReference type="RefSeq" id="XP_063138557.1">
    <property type="nucleotide sequence ID" value="XM_063282487.1"/>
</dbReference>
<dbReference type="RefSeq" id="XP_063138558.1">
    <property type="nucleotide sequence ID" value="XM_063282488.1"/>
</dbReference>
<dbReference type="RefSeq" id="XP_063138559.1">
    <property type="nucleotide sequence ID" value="XM_063282489.1"/>
</dbReference>
<dbReference type="SMR" id="O08781"/>
<dbReference type="FunCoup" id="O08781">
    <property type="interactions" value="197"/>
</dbReference>
<dbReference type="STRING" id="10116.ENSRNOP00000013858"/>
<dbReference type="GlyGen" id="O08781">
    <property type="glycosylation" value="1 site"/>
</dbReference>
<dbReference type="PhosphoSitePlus" id="O08781"/>
<dbReference type="PaxDb" id="10116-ENSRNOP00000013858"/>
<dbReference type="Ensembl" id="ENSRNOT00000113458.1">
    <property type="protein sequence ID" value="ENSRNOP00000083964.1"/>
    <property type="gene ID" value="ENSRNOG00000063864.1"/>
</dbReference>
<dbReference type="GeneID" id="64394"/>
<dbReference type="KEGG" id="rno:64394"/>
<dbReference type="UCSC" id="RGD:620134">
    <property type="organism name" value="rat"/>
</dbReference>
<dbReference type="AGR" id="RGD:620134"/>
<dbReference type="CTD" id="64393"/>
<dbReference type="RGD" id="620134">
    <property type="gene designation" value="Zmat3"/>
</dbReference>
<dbReference type="eggNOG" id="ENOG502QW4K">
    <property type="taxonomic scope" value="Eukaryota"/>
</dbReference>
<dbReference type="GeneTree" id="ENSGT00730000111202"/>
<dbReference type="HOGENOM" id="CLU_051920_1_0_1"/>
<dbReference type="InParanoid" id="O08781"/>
<dbReference type="OrthoDB" id="434647at2759"/>
<dbReference type="PhylomeDB" id="O08781"/>
<dbReference type="PRO" id="PR:O08781"/>
<dbReference type="Proteomes" id="UP000002494">
    <property type="component" value="Chromosome 2"/>
</dbReference>
<dbReference type="Bgee" id="ENSRNOG00000010119">
    <property type="expression patterns" value="Expressed in frontal cortex and 18 other cell types or tissues"/>
</dbReference>
<dbReference type="GO" id="GO:0005730">
    <property type="term" value="C:nucleolus"/>
    <property type="evidence" value="ECO:0007669"/>
    <property type="project" value="UniProtKB-SubCell"/>
</dbReference>
<dbReference type="GO" id="GO:0003723">
    <property type="term" value="F:RNA binding"/>
    <property type="evidence" value="ECO:0007669"/>
    <property type="project" value="UniProtKB-KW"/>
</dbReference>
<dbReference type="GO" id="GO:0008270">
    <property type="term" value="F:zinc ion binding"/>
    <property type="evidence" value="ECO:0007669"/>
    <property type="project" value="UniProtKB-KW"/>
</dbReference>
<dbReference type="GO" id="GO:0006915">
    <property type="term" value="P:apoptotic process"/>
    <property type="evidence" value="ECO:0007669"/>
    <property type="project" value="UniProtKB-KW"/>
</dbReference>
<dbReference type="GO" id="GO:0006974">
    <property type="term" value="P:DNA damage response"/>
    <property type="evidence" value="ECO:0007669"/>
    <property type="project" value="UniProtKB-KW"/>
</dbReference>
<dbReference type="GO" id="GO:0043065">
    <property type="term" value="P:positive regulation of apoptotic process"/>
    <property type="evidence" value="ECO:0000314"/>
    <property type="project" value="RGD"/>
</dbReference>
<dbReference type="GO" id="GO:0015031">
    <property type="term" value="P:protein transport"/>
    <property type="evidence" value="ECO:0007669"/>
    <property type="project" value="UniProtKB-KW"/>
</dbReference>
<dbReference type="FunFam" id="3.30.160.60:FF:000285">
    <property type="entry name" value="Zinc finger matrin-type protein 3"/>
    <property type="match status" value="2"/>
</dbReference>
<dbReference type="FunFam" id="3.30.160.60:FF:000612">
    <property type="entry name" value="Zinc finger matrin-type protein 3"/>
    <property type="match status" value="1"/>
</dbReference>
<dbReference type="Gene3D" id="3.30.160.60">
    <property type="entry name" value="Classic Zinc Finger"/>
    <property type="match status" value="3"/>
</dbReference>
<dbReference type="InterPro" id="IPR003604">
    <property type="entry name" value="Matrin/U1-like-C_Znf_C2H2"/>
</dbReference>
<dbReference type="InterPro" id="IPR052644">
    <property type="entry name" value="ZMAT3"/>
</dbReference>
<dbReference type="InterPro" id="IPR022755">
    <property type="entry name" value="Znf_C2H2_jaz"/>
</dbReference>
<dbReference type="InterPro" id="IPR036236">
    <property type="entry name" value="Znf_C2H2_sf"/>
</dbReference>
<dbReference type="InterPro" id="IPR013087">
    <property type="entry name" value="Znf_C2H2_type"/>
</dbReference>
<dbReference type="PANTHER" id="PTHR46786">
    <property type="entry name" value="ZINC FINGER MATRIN-TYPE PROTEIN 3"/>
    <property type="match status" value="1"/>
</dbReference>
<dbReference type="PANTHER" id="PTHR46786:SF1">
    <property type="entry name" value="ZINC FINGER MATRIN-TYPE PROTEIN 3"/>
    <property type="match status" value="1"/>
</dbReference>
<dbReference type="Pfam" id="PF12171">
    <property type="entry name" value="zf-C2H2_jaz"/>
    <property type="match status" value="1"/>
</dbReference>
<dbReference type="Pfam" id="PF12874">
    <property type="entry name" value="zf-met"/>
    <property type="match status" value="2"/>
</dbReference>
<dbReference type="SMART" id="SM00355">
    <property type="entry name" value="ZnF_C2H2"/>
    <property type="match status" value="3"/>
</dbReference>
<dbReference type="SMART" id="SM00451">
    <property type="entry name" value="ZnF_U1"/>
    <property type="match status" value="3"/>
</dbReference>
<dbReference type="SUPFAM" id="SSF57667">
    <property type="entry name" value="beta-beta-alpha zinc fingers"/>
    <property type="match status" value="3"/>
</dbReference>
<keyword id="KW-0053">Apoptosis</keyword>
<keyword id="KW-0227">DNA damage</keyword>
<keyword id="KW-0341">Growth regulation</keyword>
<keyword id="KW-0479">Metal-binding</keyword>
<keyword id="KW-0539">Nucleus</keyword>
<keyword id="KW-0653">Protein transport</keyword>
<keyword id="KW-1185">Reference proteome</keyword>
<keyword id="KW-0677">Repeat</keyword>
<keyword id="KW-0694">RNA-binding</keyword>
<keyword id="KW-0811">Translocation</keyword>
<keyword id="KW-0813">Transport</keyword>
<keyword id="KW-0862">Zinc</keyword>
<keyword id="KW-0863">Zinc-finger</keyword>